<proteinExistence type="evidence at protein level"/>
<evidence type="ECO:0000250" key="1">
    <source>
        <dbReference type="UniProtKB" id="A0A023W0B6"/>
    </source>
</evidence>
<evidence type="ECO:0000255" key="2"/>
<evidence type="ECO:0000256" key="3">
    <source>
        <dbReference type="SAM" id="MobiDB-lite"/>
    </source>
</evidence>
<evidence type="ECO:0000269" key="4">
    <source>
    </source>
</evidence>
<evidence type="ECO:0000303" key="5">
    <source>
    </source>
</evidence>
<evidence type="ECO:0000305" key="6"/>
<evidence type="ECO:0000305" key="7">
    <source>
    </source>
</evidence>
<organism>
    <name type="scientific">Ethmostigmus rubripes</name>
    <name type="common">Giant centipede</name>
    <dbReference type="NCBI Taxonomy" id="62613"/>
    <lineage>
        <taxon>Eukaryota</taxon>
        <taxon>Metazoa</taxon>
        <taxon>Ecdysozoa</taxon>
        <taxon>Arthropoda</taxon>
        <taxon>Myriapoda</taxon>
        <taxon>Chilopoda</taxon>
        <taxon>Pleurostigmophora</taxon>
        <taxon>Scolopendromorpha</taxon>
        <taxon>Scolopendridae</taxon>
        <taxon>Ethmostigmus</taxon>
    </lineage>
</organism>
<name>TX85B_ETHRU</name>
<feature type="signal peptide" evidence="2">
    <location>
        <begin position="1"/>
        <end position="22"/>
    </location>
</feature>
<feature type="propeptide" id="PRO_0000446736" evidence="7">
    <location>
        <begin position="23"/>
        <end position="94"/>
    </location>
</feature>
<feature type="peptide" id="PRO_5001526954" description="U-scoloptoxin-Er5.1a" evidence="4">
    <location>
        <begin position="95"/>
        <end position="111"/>
    </location>
</feature>
<feature type="propeptide" id="PRO_0000446737" evidence="7">
    <location>
        <begin position="112"/>
        <end position="118"/>
    </location>
</feature>
<feature type="peptide" id="PRO_0000446738" description="U-scoloptoxin-Er5.2a" evidence="4">
    <location>
        <begin position="119"/>
        <end position="138"/>
    </location>
</feature>
<feature type="propeptide" id="PRO_0000446739" evidence="7">
    <location>
        <begin position="139"/>
        <end position="167"/>
    </location>
</feature>
<feature type="repeat" description="RLWRNWE 1" evidence="7">
    <location>
        <begin position="34"/>
        <end position="40"/>
    </location>
</feature>
<feature type="repeat" description="RLWRNWE 2" evidence="7">
    <location>
        <begin position="61"/>
        <end position="67"/>
    </location>
</feature>
<feature type="repeat" description="RLWRNWE 3" evidence="7">
    <location>
        <begin position="86"/>
        <end position="92"/>
    </location>
</feature>
<feature type="repeat" description="RLWRNWE 4; approximate" evidence="7">
    <location>
        <begin position="107"/>
        <end position="113"/>
    </location>
</feature>
<feature type="repeat" description="RLWRNWE 5" evidence="7">
    <location>
        <begin position="134"/>
        <end position="140"/>
    </location>
</feature>
<feature type="region of interest" description="Disordered" evidence="3">
    <location>
        <begin position="147"/>
        <end position="167"/>
    </location>
</feature>
<feature type="modified residue" description="Pyrrolidone carboxylic acid" evidence="4">
    <location>
        <position position="95"/>
    </location>
</feature>
<feature type="modified residue" description="Pyrrolidone carboxylic acid" evidence="4">
    <location>
        <position position="119"/>
    </location>
</feature>
<accession>A0A023W157</accession>
<dbReference type="EMBL" id="KF130754">
    <property type="protein sequence ID" value="AHY22605.1"/>
    <property type="molecule type" value="mRNA"/>
</dbReference>
<dbReference type="GO" id="GO:0005576">
    <property type="term" value="C:extracellular region"/>
    <property type="evidence" value="ECO:0007669"/>
    <property type="project" value="UniProtKB-SubCell"/>
</dbReference>
<dbReference type="GO" id="GO:0090729">
    <property type="term" value="F:toxin activity"/>
    <property type="evidence" value="ECO:0007669"/>
    <property type="project" value="UniProtKB-KW"/>
</dbReference>
<keyword id="KW-0165">Cleavage on pair of basic residues</keyword>
<keyword id="KW-0903">Direct protein sequencing</keyword>
<keyword id="KW-0873">Pyrrolidone carboxylic acid</keyword>
<keyword id="KW-0677">Repeat</keyword>
<keyword id="KW-0964">Secreted</keyword>
<keyword id="KW-0732">Signal</keyword>
<keyword id="KW-0800">Toxin</keyword>
<reference key="1">
    <citation type="journal article" date="2014" name="J. Proteomics">
        <title>Multifunctional warheads: diversification of the toxin arsenal of centipedes via novel multidomain transcripts.</title>
        <authorList>
            <person name="Undheim E.A."/>
            <person name="Sunagar K."/>
            <person name="Hamilton B.R."/>
            <person name="Jones A."/>
            <person name="Venter D.J."/>
            <person name="Fry B.G."/>
            <person name="King G.F."/>
        </authorList>
    </citation>
    <scope>NUCLEOTIDE SEQUENCE [MRNA]</scope>
    <scope>PROTEIN SEQUENCE OF 95-111 AND 119-138</scope>
    <scope>IDENTIFICATION BY MASS SPECTROMETRY</scope>
    <scope>PYROGLUTAMATE FORMATION AT GLN-95 AND GLN-119</scope>
    <scope>SUBCELLULAR LOCATION</scope>
    <source>
        <tissue>Venom</tissue>
        <tissue>Venom gland</tissue>
    </source>
</reference>
<sequence>MKTNCEFPLLCLLIVLVANVEGEVEDTGLKMVKRLWRNWEDPEQRQLLDQETELEKQREKRLWRNWEDLELRQLLNEFAENQREKRLWRNWERRQVANEDDGEKAKELWRNWEDLKRRQVADLNDEQETQRDKRLWRNWEDNHATLRKRSADSLSRQKRLGKERGKE</sequence>
<comment type="subcellular location">
    <subcellularLocation>
        <location evidence="4">Secreted</location>
    </subcellularLocation>
    <text evidence="4">The mature toxins are clearly liberated from the multidomain precursors in the venom gland prior to venom expulsion and not by venom proteases upon secretion.</text>
</comment>
<comment type="tissue specificity">
    <text evidence="7">Expressed by the venom gland.</text>
</comment>
<comment type="similarity">
    <text evidence="6">Belongs to the scoloptoxin-08 family.</text>
</comment>
<protein>
    <recommendedName>
        <fullName evidence="1">U-scoloptoxin(08)-Er5b</fullName>
        <shortName evidence="1">U-SLPTX(08)-Er5b</shortName>
    </recommendedName>
    <component>
        <recommendedName>
            <fullName evidence="5">U-scoloptoxin-Er5.1a</fullName>
            <shortName evidence="5">U-SLPTX-Er5.1a</shortName>
        </recommendedName>
    </component>
    <component>
        <recommendedName>
            <fullName evidence="5">U-scoloptoxin-Er5.2a</fullName>
            <shortName evidence="5">U-SLPTX-Er5.2a</shortName>
        </recommendedName>
    </component>
</protein>